<keyword id="KW-0002">3D-structure</keyword>
<keyword id="KW-1003">Cell membrane</keyword>
<keyword id="KW-0966">Cell projection</keyword>
<keyword id="KW-0472">Membrane</keyword>
<keyword id="KW-0488">Methylation</keyword>
<keyword id="KW-0597">Phosphoprotein</keyword>
<keyword id="KW-0628">Postsynaptic cell membrane</keyword>
<keyword id="KW-1267">Proteomics identification</keyword>
<keyword id="KW-1185">Reference proteome</keyword>
<keyword id="KW-0770">Synapse</keyword>
<gene>
    <name type="primary">KCTD8</name>
</gene>
<name>KCTD8_HUMAN</name>
<comment type="function">
    <text evidence="1">Auxiliary subunit of GABA-B receptors that determine the pharmacology and kinetics of the receptor response. Increases agonist potency and markedly alter the G-protein signaling of the receptors by accelerating onset and promoting desensitization (By similarity).</text>
</comment>
<comment type="subunit">
    <text evidence="1">Interacts as a tetramer with GABRB1 and GABRB2.</text>
</comment>
<comment type="interaction">
    <interactant intactId="EBI-6426198">
        <id>Q6ZWB6</id>
    </interactant>
    <interactant intactId="EBI-7060731">
        <id>P61978-2</id>
        <label>HNRNPK</label>
    </interactant>
    <organismsDiffer>false</organismsDiffer>
    <experiments>3</experiments>
</comment>
<comment type="interaction">
    <interactant intactId="EBI-6426198">
        <id>Q6ZWB6</id>
    </interactant>
    <interactant intactId="EBI-356498">
        <id>P62258</id>
        <label>YWHAE</label>
    </interactant>
    <organismsDiffer>false</organismsDiffer>
    <experiments>2</experiments>
</comment>
<comment type="subcellular location">
    <subcellularLocation>
        <location evidence="1">Presynaptic cell membrane</location>
    </subcellularLocation>
    <subcellularLocation>
        <location evidence="1">Postsynaptic cell membrane</location>
    </subcellularLocation>
</comment>
<feature type="chain" id="PRO_0000251481" description="BTB/POZ domain-containing protein KCTD8">
    <location>
        <begin position="1"/>
        <end position="473"/>
    </location>
</feature>
<feature type="domain" description="BTB">
    <location>
        <begin position="44"/>
        <end position="122"/>
    </location>
</feature>
<feature type="region of interest" description="Disordered" evidence="3">
    <location>
        <begin position="1"/>
        <end position="36"/>
    </location>
</feature>
<feature type="region of interest" description="Disordered" evidence="3">
    <location>
        <begin position="326"/>
        <end position="409"/>
    </location>
</feature>
<feature type="compositionally biased region" description="Low complexity" evidence="3">
    <location>
        <begin position="21"/>
        <end position="35"/>
    </location>
</feature>
<feature type="compositionally biased region" description="Basic and acidic residues" evidence="3">
    <location>
        <begin position="330"/>
        <end position="346"/>
    </location>
</feature>
<feature type="compositionally biased region" description="Polar residues" evidence="3">
    <location>
        <begin position="347"/>
        <end position="388"/>
    </location>
</feature>
<feature type="modified residue" description="Phosphoserine" evidence="2">
    <location>
        <position position="78"/>
    </location>
</feature>
<feature type="modified residue" description="Omega-N-methylarginine" evidence="2">
    <location>
        <position position="80"/>
    </location>
</feature>
<feature type="modified residue" description="Phosphoserine" evidence="2">
    <location>
        <position position="410"/>
    </location>
</feature>
<feature type="sequence variant" id="VAR_027692" description="In dbSNP:rs13115990.">
    <original>P</original>
    <variation>L</variation>
    <location>
        <position position="329"/>
    </location>
</feature>
<feature type="strand" evidence="4">
    <location>
        <begin position="207"/>
        <end position="216"/>
    </location>
</feature>
<feature type="strand" evidence="4">
    <location>
        <begin position="234"/>
        <end position="240"/>
    </location>
</feature>
<feature type="helix" evidence="4">
    <location>
        <begin position="241"/>
        <end position="248"/>
    </location>
</feature>
<feature type="helix" evidence="4">
    <location>
        <begin position="249"/>
        <end position="251"/>
    </location>
</feature>
<feature type="strand" evidence="4">
    <location>
        <begin position="265"/>
        <end position="270"/>
    </location>
</feature>
<feature type="helix" evidence="4">
    <location>
        <begin position="276"/>
        <end position="285"/>
    </location>
</feature>
<feature type="strand" evidence="4">
    <location>
        <begin position="289"/>
        <end position="300"/>
    </location>
</feature>
<feature type="strand" evidence="4">
    <location>
        <begin position="310"/>
        <end position="321"/>
    </location>
</feature>
<proteinExistence type="evidence at protein level"/>
<sequence>MALKDTGSGGSTILPISEMVSSSSSPGASAAAAPGPCAPSPFPEVVELNVGGQVYVTKHSTLLSVPDSTLASMFSPSSPRGGARRRGELPRDSRARFFIDRDGFLFRYVLDYLRDKQLALPEHFPEKERLLREAEYFQLTDLVKLLSPKVTKQNSLNDEGCQSDLEDNVSQGSSDALLLRGAAAAVPSGPGAHGGGGGGGAQDKRSGFLTLGYRGSYTTVRDNQADAKFRRVARIMVCGRIALAKEVFGDTLNESRDPDRQPEKYTSRFYLKFTYLEQAFDRLSEAGFHMVACNSSGTAAFVNQYRDDKIWSSYTEYIFFRPPQKIVSPKQEHEDRKHDKVTDKGSESGTSCNELSTSSCDSHSEASTPQDNPSSAQQATAHQPNTLTLDRPSKKAPVQWIPPPDKRRNSELFQTLISKSRETNLSKKKVCEKLSVEEEMKKCIQDFKKIHIPDYFPERKRQWQSELLQKYGL</sequence>
<reference key="1">
    <citation type="journal article" date="2004" name="Nat. Genet.">
        <title>Complete sequencing and characterization of 21,243 full-length human cDNAs.</title>
        <authorList>
            <person name="Ota T."/>
            <person name="Suzuki Y."/>
            <person name="Nishikawa T."/>
            <person name="Otsuki T."/>
            <person name="Sugiyama T."/>
            <person name="Irie R."/>
            <person name="Wakamatsu A."/>
            <person name="Hayashi K."/>
            <person name="Sato H."/>
            <person name="Nagai K."/>
            <person name="Kimura K."/>
            <person name="Makita H."/>
            <person name="Sekine M."/>
            <person name="Obayashi M."/>
            <person name="Nishi T."/>
            <person name="Shibahara T."/>
            <person name="Tanaka T."/>
            <person name="Ishii S."/>
            <person name="Yamamoto J."/>
            <person name="Saito K."/>
            <person name="Kawai Y."/>
            <person name="Isono Y."/>
            <person name="Nakamura Y."/>
            <person name="Nagahari K."/>
            <person name="Murakami K."/>
            <person name="Yasuda T."/>
            <person name="Iwayanagi T."/>
            <person name="Wagatsuma M."/>
            <person name="Shiratori A."/>
            <person name="Sudo H."/>
            <person name="Hosoiri T."/>
            <person name="Kaku Y."/>
            <person name="Kodaira H."/>
            <person name="Kondo H."/>
            <person name="Sugawara M."/>
            <person name="Takahashi M."/>
            <person name="Kanda K."/>
            <person name="Yokoi T."/>
            <person name="Furuya T."/>
            <person name="Kikkawa E."/>
            <person name="Omura Y."/>
            <person name="Abe K."/>
            <person name="Kamihara K."/>
            <person name="Katsuta N."/>
            <person name="Sato K."/>
            <person name="Tanikawa M."/>
            <person name="Yamazaki M."/>
            <person name="Ninomiya K."/>
            <person name="Ishibashi T."/>
            <person name="Yamashita H."/>
            <person name="Murakawa K."/>
            <person name="Fujimori K."/>
            <person name="Tanai H."/>
            <person name="Kimata M."/>
            <person name="Watanabe M."/>
            <person name="Hiraoka S."/>
            <person name="Chiba Y."/>
            <person name="Ishida S."/>
            <person name="Ono Y."/>
            <person name="Takiguchi S."/>
            <person name="Watanabe S."/>
            <person name="Yosida M."/>
            <person name="Hotuta T."/>
            <person name="Kusano J."/>
            <person name="Kanehori K."/>
            <person name="Takahashi-Fujii A."/>
            <person name="Hara H."/>
            <person name="Tanase T.-O."/>
            <person name="Nomura Y."/>
            <person name="Togiya S."/>
            <person name="Komai F."/>
            <person name="Hara R."/>
            <person name="Takeuchi K."/>
            <person name="Arita M."/>
            <person name="Imose N."/>
            <person name="Musashino K."/>
            <person name="Yuuki H."/>
            <person name="Oshima A."/>
            <person name="Sasaki N."/>
            <person name="Aotsuka S."/>
            <person name="Yoshikawa Y."/>
            <person name="Matsunawa H."/>
            <person name="Ichihara T."/>
            <person name="Shiohata N."/>
            <person name="Sano S."/>
            <person name="Moriya S."/>
            <person name="Momiyama H."/>
            <person name="Satoh N."/>
            <person name="Takami S."/>
            <person name="Terashima Y."/>
            <person name="Suzuki O."/>
            <person name="Nakagawa S."/>
            <person name="Senoh A."/>
            <person name="Mizoguchi H."/>
            <person name="Goto Y."/>
            <person name="Shimizu F."/>
            <person name="Wakebe H."/>
            <person name="Hishigaki H."/>
            <person name="Watanabe T."/>
            <person name="Sugiyama A."/>
            <person name="Takemoto M."/>
            <person name="Kawakami B."/>
            <person name="Yamazaki M."/>
            <person name="Watanabe K."/>
            <person name="Kumagai A."/>
            <person name="Itakura S."/>
            <person name="Fukuzumi Y."/>
            <person name="Fujimori Y."/>
            <person name="Komiyama M."/>
            <person name="Tashiro H."/>
            <person name="Tanigami A."/>
            <person name="Fujiwara T."/>
            <person name="Ono T."/>
            <person name="Yamada K."/>
            <person name="Fujii Y."/>
            <person name="Ozaki K."/>
            <person name="Hirao M."/>
            <person name="Ohmori Y."/>
            <person name="Kawabata A."/>
            <person name="Hikiji T."/>
            <person name="Kobatake N."/>
            <person name="Inagaki H."/>
            <person name="Ikema Y."/>
            <person name="Okamoto S."/>
            <person name="Okitani R."/>
            <person name="Kawakami T."/>
            <person name="Noguchi S."/>
            <person name="Itoh T."/>
            <person name="Shigeta K."/>
            <person name="Senba T."/>
            <person name="Matsumura K."/>
            <person name="Nakajima Y."/>
            <person name="Mizuno T."/>
            <person name="Morinaga M."/>
            <person name="Sasaki M."/>
            <person name="Togashi T."/>
            <person name="Oyama M."/>
            <person name="Hata H."/>
            <person name="Watanabe M."/>
            <person name="Komatsu T."/>
            <person name="Mizushima-Sugano J."/>
            <person name="Satoh T."/>
            <person name="Shirai Y."/>
            <person name="Takahashi Y."/>
            <person name="Nakagawa K."/>
            <person name="Okumura K."/>
            <person name="Nagase T."/>
            <person name="Nomura N."/>
            <person name="Kikuchi H."/>
            <person name="Masuho Y."/>
            <person name="Yamashita R."/>
            <person name="Nakai K."/>
            <person name="Yada T."/>
            <person name="Nakamura Y."/>
            <person name="Ohara O."/>
            <person name="Isogai T."/>
            <person name="Sugano S."/>
        </authorList>
    </citation>
    <scope>NUCLEOTIDE SEQUENCE [LARGE SCALE MRNA]</scope>
    <source>
        <tissue>Brain</tissue>
    </source>
</reference>
<reference key="2">
    <citation type="journal article" date="2004" name="Genome Res.">
        <title>The status, quality, and expansion of the NIH full-length cDNA project: the Mammalian Gene Collection (MGC).</title>
        <authorList>
            <consortium name="The MGC Project Team"/>
        </authorList>
    </citation>
    <scope>NUCLEOTIDE SEQUENCE [LARGE SCALE MRNA]</scope>
    <source>
        <tissue>Brain</tissue>
    </source>
</reference>
<evidence type="ECO:0000250" key="1"/>
<evidence type="ECO:0000250" key="2">
    <source>
        <dbReference type="UniProtKB" id="Q50H33"/>
    </source>
</evidence>
<evidence type="ECO:0000256" key="3">
    <source>
        <dbReference type="SAM" id="MobiDB-lite"/>
    </source>
</evidence>
<evidence type="ECO:0007829" key="4">
    <source>
        <dbReference type="PDB" id="6G57"/>
    </source>
</evidence>
<accession>Q6ZWB6</accession>
<accession>A2RU39</accession>
<organism>
    <name type="scientific">Homo sapiens</name>
    <name type="common">Human</name>
    <dbReference type="NCBI Taxonomy" id="9606"/>
    <lineage>
        <taxon>Eukaryota</taxon>
        <taxon>Metazoa</taxon>
        <taxon>Chordata</taxon>
        <taxon>Craniata</taxon>
        <taxon>Vertebrata</taxon>
        <taxon>Euteleostomi</taxon>
        <taxon>Mammalia</taxon>
        <taxon>Eutheria</taxon>
        <taxon>Euarchontoglires</taxon>
        <taxon>Primates</taxon>
        <taxon>Haplorrhini</taxon>
        <taxon>Catarrhini</taxon>
        <taxon>Hominidae</taxon>
        <taxon>Homo</taxon>
    </lineage>
</organism>
<protein>
    <recommendedName>
        <fullName>BTB/POZ domain-containing protein KCTD8</fullName>
    </recommendedName>
</protein>
<dbReference type="EMBL" id="AK123347">
    <property type="protein sequence ID" value="BAC85588.1"/>
    <property type="molecule type" value="mRNA"/>
</dbReference>
<dbReference type="EMBL" id="BC132743">
    <property type="protein sequence ID" value="AAI32744.1"/>
    <property type="molecule type" value="mRNA"/>
</dbReference>
<dbReference type="EMBL" id="BC136793">
    <property type="protein sequence ID" value="AAI36794.1"/>
    <property type="molecule type" value="mRNA"/>
</dbReference>
<dbReference type="CCDS" id="CCDS3467.1"/>
<dbReference type="RefSeq" id="NP_938167.1">
    <property type="nucleotide sequence ID" value="NM_198353.3"/>
</dbReference>
<dbReference type="PDB" id="6G57">
    <property type="method" value="X-ray"/>
    <property type="resolution" value="2.80 A"/>
    <property type="chains" value="A/B/C/D=201-322"/>
</dbReference>
<dbReference type="PDBsum" id="6G57"/>
<dbReference type="SMR" id="Q6ZWB6"/>
<dbReference type="BioGRID" id="132113">
    <property type="interactions" value="3"/>
</dbReference>
<dbReference type="CORUM" id="Q6ZWB6"/>
<dbReference type="FunCoup" id="Q6ZWB6">
    <property type="interactions" value="450"/>
</dbReference>
<dbReference type="IntAct" id="Q6ZWB6">
    <property type="interactions" value="9"/>
</dbReference>
<dbReference type="STRING" id="9606.ENSP00000353129"/>
<dbReference type="ChEMBL" id="CHEMBL4523356"/>
<dbReference type="GuidetoPHARMACOLOGY" id="1917"/>
<dbReference type="iPTMnet" id="Q6ZWB6"/>
<dbReference type="PhosphoSitePlus" id="Q6ZWB6"/>
<dbReference type="SwissPalm" id="Q6ZWB6"/>
<dbReference type="BioMuta" id="KCTD8"/>
<dbReference type="DMDM" id="74749707"/>
<dbReference type="jPOST" id="Q6ZWB6"/>
<dbReference type="MassIVE" id="Q6ZWB6"/>
<dbReference type="PaxDb" id="9606-ENSP00000353129"/>
<dbReference type="PeptideAtlas" id="Q6ZWB6"/>
<dbReference type="ProteomicsDB" id="68472"/>
<dbReference type="Antibodypedia" id="23721">
    <property type="antibodies" value="76 antibodies from 15 providers"/>
</dbReference>
<dbReference type="DNASU" id="386617"/>
<dbReference type="Ensembl" id="ENST00000360029.4">
    <property type="protein sequence ID" value="ENSP00000353129.3"/>
    <property type="gene ID" value="ENSG00000183783.7"/>
</dbReference>
<dbReference type="GeneID" id="386617"/>
<dbReference type="KEGG" id="hsa:386617"/>
<dbReference type="MANE-Select" id="ENST00000360029.4">
    <property type="protein sequence ID" value="ENSP00000353129.3"/>
    <property type="RefSeq nucleotide sequence ID" value="NM_198353.3"/>
    <property type="RefSeq protein sequence ID" value="NP_938167.1"/>
</dbReference>
<dbReference type="UCSC" id="uc003gwu.4">
    <property type="organism name" value="human"/>
</dbReference>
<dbReference type="AGR" id="HGNC:22394"/>
<dbReference type="CTD" id="386617"/>
<dbReference type="DisGeNET" id="386617"/>
<dbReference type="GeneCards" id="KCTD8"/>
<dbReference type="HGNC" id="HGNC:22394">
    <property type="gene designation" value="KCTD8"/>
</dbReference>
<dbReference type="HPA" id="ENSG00000183783">
    <property type="expression patterns" value="Group enriched (brain, retina)"/>
</dbReference>
<dbReference type="MIM" id="618442">
    <property type="type" value="gene"/>
</dbReference>
<dbReference type="neXtProt" id="NX_Q6ZWB6"/>
<dbReference type="OpenTargets" id="ENSG00000183783"/>
<dbReference type="PharmGKB" id="PA134909779"/>
<dbReference type="VEuPathDB" id="HostDB:ENSG00000183783"/>
<dbReference type="eggNOG" id="KOG2723">
    <property type="taxonomic scope" value="Eukaryota"/>
</dbReference>
<dbReference type="GeneTree" id="ENSGT00940000161041"/>
<dbReference type="HOGENOM" id="CLU_057051_1_0_1"/>
<dbReference type="InParanoid" id="Q6ZWB6"/>
<dbReference type="OMA" id="DNPPNAQ"/>
<dbReference type="OrthoDB" id="2414723at2759"/>
<dbReference type="PAN-GO" id="Q6ZWB6">
    <property type="GO annotations" value="2 GO annotations based on evolutionary models"/>
</dbReference>
<dbReference type="PhylomeDB" id="Q6ZWB6"/>
<dbReference type="TreeFam" id="TF315332"/>
<dbReference type="PathwayCommons" id="Q6ZWB6"/>
<dbReference type="SignaLink" id="Q6ZWB6"/>
<dbReference type="BioGRID-ORCS" id="386617">
    <property type="hits" value="15 hits in 1145 CRISPR screens"/>
</dbReference>
<dbReference type="CD-CODE" id="FB4E32DD">
    <property type="entry name" value="Presynaptic clusters and postsynaptic densities"/>
</dbReference>
<dbReference type="ChiTaRS" id="KCTD8">
    <property type="organism name" value="human"/>
</dbReference>
<dbReference type="GenomeRNAi" id="386617"/>
<dbReference type="Pharos" id="Q6ZWB6">
    <property type="development level" value="Tbio"/>
</dbReference>
<dbReference type="PRO" id="PR:Q6ZWB6"/>
<dbReference type="Proteomes" id="UP000005640">
    <property type="component" value="Chromosome 4"/>
</dbReference>
<dbReference type="RNAct" id="Q6ZWB6">
    <property type="molecule type" value="protein"/>
</dbReference>
<dbReference type="Bgee" id="ENSG00000183783">
    <property type="expression patterns" value="Expressed in cerebellar vermis and 91 other cell types or tissues"/>
</dbReference>
<dbReference type="ExpressionAtlas" id="Q6ZWB6">
    <property type="expression patterns" value="baseline and differential"/>
</dbReference>
<dbReference type="GO" id="GO:0042995">
    <property type="term" value="C:cell projection"/>
    <property type="evidence" value="ECO:0007669"/>
    <property type="project" value="UniProtKB-KW"/>
</dbReference>
<dbReference type="GO" id="GO:0045211">
    <property type="term" value="C:postsynaptic membrane"/>
    <property type="evidence" value="ECO:0007669"/>
    <property type="project" value="UniProtKB-SubCell"/>
</dbReference>
<dbReference type="GO" id="GO:0048787">
    <property type="term" value="C:presynaptic active zone membrane"/>
    <property type="evidence" value="ECO:0007669"/>
    <property type="project" value="Ensembl"/>
</dbReference>
<dbReference type="GO" id="GO:0043235">
    <property type="term" value="C:receptor complex"/>
    <property type="evidence" value="ECO:0000318"/>
    <property type="project" value="GO_Central"/>
</dbReference>
<dbReference type="GO" id="GO:0042802">
    <property type="term" value="F:identical protein binding"/>
    <property type="evidence" value="ECO:0007669"/>
    <property type="project" value="UniProtKB-ARBA"/>
</dbReference>
<dbReference type="GO" id="GO:0051260">
    <property type="term" value="P:protein homooligomerization"/>
    <property type="evidence" value="ECO:0007669"/>
    <property type="project" value="InterPro"/>
</dbReference>
<dbReference type="GO" id="GO:0008277">
    <property type="term" value="P:regulation of G protein-coupled receptor signaling pathway"/>
    <property type="evidence" value="ECO:0000318"/>
    <property type="project" value="GO_Central"/>
</dbReference>
<dbReference type="CDD" id="cd18396">
    <property type="entry name" value="BTB_POZ_KCTD8"/>
    <property type="match status" value="1"/>
</dbReference>
<dbReference type="CDD" id="cd22218">
    <property type="entry name" value="H1_KCTD8"/>
    <property type="match status" value="1"/>
</dbReference>
<dbReference type="FunFam" id="3.30.710.10:FF:000031">
    <property type="entry name" value="BTB/POZ domain-containing protein KCTD16"/>
    <property type="match status" value="1"/>
</dbReference>
<dbReference type="Gene3D" id="3.30.710.10">
    <property type="entry name" value="Potassium Channel Kv1.1, Chain A"/>
    <property type="match status" value="1"/>
</dbReference>
<dbReference type="InterPro" id="IPR000210">
    <property type="entry name" value="BTB/POZ_dom"/>
</dbReference>
<dbReference type="InterPro" id="IPR049904">
    <property type="entry name" value="H1_KCTD8"/>
</dbReference>
<dbReference type="InterPro" id="IPR011333">
    <property type="entry name" value="SKP1/BTB/POZ_sf"/>
</dbReference>
<dbReference type="InterPro" id="IPR003131">
    <property type="entry name" value="T1-type_BTB"/>
</dbReference>
<dbReference type="PANTHER" id="PTHR14499:SF68">
    <property type="entry name" value="BTB_POZ DOMAIN-CONTAINING PROTEIN KCTD8"/>
    <property type="match status" value="1"/>
</dbReference>
<dbReference type="PANTHER" id="PTHR14499">
    <property type="entry name" value="POTASSIUM CHANNEL TETRAMERIZATION DOMAIN-CONTAINING"/>
    <property type="match status" value="1"/>
</dbReference>
<dbReference type="Pfam" id="PF02214">
    <property type="entry name" value="BTB_2"/>
    <property type="match status" value="1"/>
</dbReference>
<dbReference type="Pfam" id="PF23110">
    <property type="entry name" value="H1_KCTD8_12_16"/>
    <property type="match status" value="1"/>
</dbReference>
<dbReference type="SMART" id="SM00225">
    <property type="entry name" value="BTB"/>
    <property type="match status" value="1"/>
</dbReference>
<dbReference type="SUPFAM" id="SSF54695">
    <property type="entry name" value="POZ domain"/>
    <property type="match status" value="1"/>
</dbReference>